<comment type="function">
    <text evidence="1">Peptidoglycan polymerase that catalyzes glycan chain elongation from lipid-linked precursors.</text>
</comment>
<comment type="catalytic activity">
    <reaction evidence="1">
        <text>[GlcNAc-(1-&gt;4)-Mur2Ac(oyl-L-Ala-gamma-D-Glu-L-Lys-D-Ala-D-Ala)](n)-di-trans,octa-cis-undecaprenyl diphosphate + beta-D-GlcNAc-(1-&gt;4)-Mur2Ac(oyl-L-Ala-gamma-D-Glu-L-Lys-D-Ala-D-Ala)-di-trans,octa-cis-undecaprenyl diphosphate = [GlcNAc-(1-&gt;4)-Mur2Ac(oyl-L-Ala-gamma-D-Glu-L-Lys-D-Ala-D-Ala)](n+1)-di-trans,octa-cis-undecaprenyl diphosphate + di-trans,octa-cis-undecaprenyl diphosphate + H(+)</text>
        <dbReference type="Rhea" id="RHEA:23708"/>
        <dbReference type="Rhea" id="RHEA-COMP:9602"/>
        <dbReference type="Rhea" id="RHEA-COMP:9603"/>
        <dbReference type="ChEBI" id="CHEBI:15378"/>
        <dbReference type="ChEBI" id="CHEBI:58405"/>
        <dbReference type="ChEBI" id="CHEBI:60033"/>
        <dbReference type="ChEBI" id="CHEBI:78435"/>
        <dbReference type="EC" id="2.4.99.28"/>
    </reaction>
</comment>
<comment type="pathway">
    <text evidence="1">Cell wall biogenesis; peptidoglycan biosynthesis.</text>
</comment>
<comment type="subcellular location">
    <subcellularLocation>
        <location evidence="1">Cell inner membrane</location>
        <topology evidence="1">Single-pass membrane protein</topology>
    </subcellularLocation>
</comment>
<comment type="similarity">
    <text evidence="1">Belongs to the glycosyltransferase 51 family.</text>
</comment>
<name>MTGA_SHEDO</name>
<dbReference type="EC" id="2.4.99.28" evidence="1"/>
<dbReference type="EMBL" id="CP000302">
    <property type="protein sequence ID" value="ABE54442.1"/>
    <property type="molecule type" value="Genomic_DNA"/>
</dbReference>
<dbReference type="RefSeq" id="WP_011495603.1">
    <property type="nucleotide sequence ID" value="NC_007954.1"/>
</dbReference>
<dbReference type="SMR" id="Q12Q34"/>
<dbReference type="STRING" id="318161.Sden_1156"/>
<dbReference type="CAZy" id="GT51">
    <property type="family name" value="Glycosyltransferase Family 51"/>
</dbReference>
<dbReference type="KEGG" id="sdn:Sden_1156"/>
<dbReference type="eggNOG" id="COG0744">
    <property type="taxonomic scope" value="Bacteria"/>
</dbReference>
<dbReference type="HOGENOM" id="CLU_006354_1_1_6"/>
<dbReference type="OrthoDB" id="9766909at2"/>
<dbReference type="UniPathway" id="UPA00219"/>
<dbReference type="Proteomes" id="UP000001982">
    <property type="component" value="Chromosome"/>
</dbReference>
<dbReference type="GO" id="GO:0009274">
    <property type="term" value="C:peptidoglycan-based cell wall"/>
    <property type="evidence" value="ECO:0007669"/>
    <property type="project" value="InterPro"/>
</dbReference>
<dbReference type="GO" id="GO:0005886">
    <property type="term" value="C:plasma membrane"/>
    <property type="evidence" value="ECO:0007669"/>
    <property type="project" value="UniProtKB-SubCell"/>
</dbReference>
<dbReference type="GO" id="GO:0016763">
    <property type="term" value="F:pentosyltransferase activity"/>
    <property type="evidence" value="ECO:0007669"/>
    <property type="project" value="InterPro"/>
</dbReference>
<dbReference type="GO" id="GO:0008955">
    <property type="term" value="F:peptidoglycan glycosyltransferase activity"/>
    <property type="evidence" value="ECO:0007669"/>
    <property type="project" value="UniProtKB-UniRule"/>
</dbReference>
<dbReference type="GO" id="GO:0071555">
    <property type="term" value="P:cell wall organization"/>
    <property type="evidence" value="ECO:0007669"/>
    <property type="project" value="UniProtKB-KW"/>
</dbReference>
<dbReference type="GO" id="GO:0009252">
    <property type="term" value="P:peptidoglycan biosynthetic process"/>
    <property type="evidence" value="ECO:0007669"/>
    <property type="project" value="UniProtKB-UniRule"/>
</dbReference>
<dbReference type="GO" id="GO:0008360">
    <property type="term" value="P:regulation of cell shape"/>
    <property type="evidence" value="ECO:0007669"/>
    <property type="project" value="UniProtKB-KW"/>
</dbReference>
<dbReference type="Gene3D" id="1.10.3810.10">
    <property type="entry name" value="Biosynthetic peptidoglycan transglycosylase-like"/>
    <property type="match status" value="1"/>
</dbReference>
<dbReference type="HAMAP" id="MF_00766">
    <property type="entry name" value="PGT_MtgA"/>
    <property type="match status" value="1"/>
</dbReference>
<dbReference type="InterPro" id="IPR001264">
    <property type="entry name" value="Glyco_trans_51"/>
</dbReference>
<dbReference type="InterPro" id="IPR023346">
    <property type="entry name" value="Lysozyme-like_dom_sf"/>
</dbReference>
<dbReference type="InterPro" id="IPR036950">
    <property type="entry name" value="PBP_transglycosylase"/>
</dbReference>
<dbReference type="InterPro" id="IPR011812">
    <property type="entry name" value="Pep_trsgly"/>
</dbReference>
<dbReference type="NCBIfam" id="TIGR02070">
    <property type="entry name" value="mono_pep_trsgly"/>
    <property type="match status" value="1"/>
</dbReference>
<dbReference type="PANTHER" id="PTHR30400:SF0">
    <property type="entry name" value="BIOSYNTHETIC PEPTIDOGLYCAN TRANSGLYCOSYLASE"/>
    <property type="match status" value="1"/>
</dbReference>
<dbReference type="PANTHER" id="PTHR30400">
    <property type="entry name" value="MONOFUNCTIONAL BIOSYNTHETIC PEPTIDOGLYCAN TRANSGLYCOSYLASE"/>
    <property type="match status" value="1"/>
</dbReference>
<dbReference type="Pfam" id="PF00912">
    <property type="entry name" value="Transgly"/>
    <property type="match status" value="1"/>
</dbReference>
<dbReference type="SUPFAM" id="SSF53955">
    <property type="entry name" value="Lysozyme-like"/>
    <property type="match status" value="1"/>
</dbReference>
<protein>
    <recommendedName>
        <fullName evidence="1">Biosynthetic peptidoglycan transglycosylase</fullName>
        <ecNumber evidence="1">2.4.99.28</ecNumber>
    </recommendedName>
    <alternativeName>
        <fullName evidence="1">Glycan polymerase</fullName>
    </alternativeName>
    <alternativeName>
        <fullName evidence="1">Peptidoglycan glycosyltransferase MtgA</fullName>
        <shortName evidence="1">PGT</shortName>
    </alternativeName>
</protein>
<proteinExistence type="inferred from homology"/>
<evidence type="ECO:0000255" key="1">
    <source>
        <dbReference type="HAMAP-Rule" id="MF_00766"/>
    </source>
</evidence>
<feature type="chain" id="PRO_1000017316" description="Biosynthetic peptidoglycan transglycosylase">
    <location>
        <begin position="1"/>
        <end position="229"/>
    </location>
</feature>
<feature type="transmembrane region" description="Helical" evidence="1">
    <location>
        <begin position="14"/>
        <end position="34"/>
    </location>
</feature>
<keyword id="KW-0997">Cell inner membrane</keyword>
<keyword id="KW-1003">Cell membrane</keyword>
<keyword id="KW-0133">Cell shape</keyword>
<keyword id="KW-0961">Cell wall biogenesis/degradation</keyword>
<keyword id="KW-0328">Glycosyltransferase</keyword>
<keyword id="KW-0472">Membrane</keyword>
<keyword id="KW-0573">Peptidoglycan synthesis</keyword>
<keyword id="KW-1185">Reference proteome</keyword>
<keyword id="KW-0808">Transferase</keyword>
<keyword id="KW-0812">Transmembrane</keyword>
<keyword id="KW-1133">Transmembrane helix</keyword>
<sequence>MTVRRRGFMAWTWFITWRFLLVVVLLLLVLLLVLRFVPPPTTSFMLQSAYPVSQHWVSIDELPSHLPLAVVASEDQLFPKHFGIDFTSITKALNQYDDGQGLRGASTITQQTAKNLLLWPGRNLVRKGLEAMLAVSLEAVWGKKRILEVYLNVAEFGKGIYGVEAASRHYFNKSARYLSINEAARLAVLLPSPRSRSPHHLTPYLHQRVAWGEKQMRQLGSGYLKTILN</sequence>
<accession>Q12Q34</accession>
<organism>
    <name type="scientific">Shewanella denitrificans (strain OS217 / ATCC BAA-1090 / DSM 15013)</name>
    <dbReference type="NCBI Taxonomy" id="318161"/>
    <lineage>
        <taxon>Bacteria</taxon>
        <taxon>Pseudomonadati</taxon>
        <taxon>Pseudomonadota</taxon>
        <taxon>Gammaproteobacteria</taxon>
        <taxon>Alteromonadales</taxon>
        <taxon>Shewanellaceae</taxon>
        <taxon>Shewanella</taxon>
    </lineage>
</organism>
<reference key="1">
    <citation type="submission" date="2006-03" db="EMBL/GenBank/DDBJ databases">
        <title>Complete sequence of Shewanella denitrificans OS217.</title>
        <authorList>
            <consortium name="US DOE Joint Genome Institute"/>
            <person name="Copeland A."/>
            <person name="Lucas S."/>
            <person name="Lapidus A."/>
            <person name="Barry K."/>
            <person name="Detter J.C."/>
            <person name="Glavina del Rio T."/>
            <person name="Hammon N."/>
            <person name="Israni S."/>
            <person name="Dalin E."/>
            <person name="Tice H."/>
            <person name="Pitluck S."/>
            <person name="Brettin T."/>
            <person name="Bruce D."/>
            <person name="Han C."/>
            <person name="Tapia R."/>
            <person name="Gilna P."/>
            <person name="Kiss H."/>
            <person name="Schmutz J."/>
            <person name="Larimer F."/>
            <person name="Land M."/>
            <person name="Hauser L."/>
            <person name="Kyrpides N."/>
            <person name="Lykidis A."/>
            <person name="Richardson P."/>
        </authorList>
    </citation>
    <scope>NUCLEOTIDE SEQUENCE [LARGE SCALE GENOMIC DNA]</scope>
    <source>
        <strain>OS217 / ATCC BAA-1090 / DSM 15013</strain>
    </source>
</reference>
<gene>
    <name evidence="1" type="primary">mtgA</name>
    <name type="ordered locus">Sden_1156</name>
</gene>